<feature type="chain" id="PRO_0000212787" description="Zinc carboxypeptidase">
    <location>
        <begin position="1" status="less than"/>
        <end position="304"/>
    </location>
</feature>
<feature type="domain" description="Peptidase M14" evidence="3">
    <location>
        <begin position="1"/>
        <end position="294"/>
    </location>
</feature>
<feature type="active site" description="Proton donor/acceptor" evidence="3">
    <location>
        <position position="259"/>
    </location>
</feature>
<feature type="binding site" evidence="3">
    <location>
        <position position="58"/>
    </location>
    <ligand>
        <name>Zn(2+)</name>
        <dbReference type="ChEBI" id="CHEBI:29105"/>
        <note>catalytic</note>
    </ligand>
</feature>
<feature type="binding site" evidence="3">
    <location>
        <position position="61"/>
    </location>
    <ligand>
        <name>Zn(2+)</name>
        <dbReference type="ChEBI" id="CHEBI:29105"/>
        <note>catalytic</note>
    </ligand>
</feature>
<feature type="binding site" evidence="3">
    <location>
        <position position="184"/>
    </location>
    <ligand>
        <name>Zn(2+)</name>
        <dbReference type="ChEBI" id="CHEBI:29105"/>
        <note>catalytic</note>
    </ligand>
</feature>
<feature type="disulfide bond" evidence="1">
    <location>
        <begin position="125"/>
        <end position="148"/>
    </location>
</feature>
<feature type="non-terminal residue">
    <location>
        <position position="1"/>
    </location>
</feature>
<name>CBPZ_SIMVI</name>
<organism>
    <name type="scientific">Simulium vittatum</name>
    <name type="common">Striped black fly</name>
    <dbReference type="NCBI Taxonomy" id="7192"/>
    <lineage>
        <taxon>Eukaryota</taxon>
        <taxon>Metazoa</taxon>
        <taxon>Ecdysozoa</taxon>
        <taxon>Arthropoda</taxon>
        <taxon>Hexapoda</taxon>
        <taxon>Insecta</taxon>
        <taxon>Pterygota</taxon>
        <taxon>Neoptera</taxon>
        <taxon>Endopterygota</taxon>
        <taxon>Diptera</taxon>
        <taxon>Nematocera</taxon>
        <taxon>Chironomoidea</taxon>
        <taxon>Simuliidae</taxon>
        <taxon>Simulium</taxon>
    </lineage>
</organism>
<dbReference type="EC" id="3.4.17.-"/>
<dbReference type="EMBL" id="L08481">
    <property type="protein sequence ID" value="AAA18531.1"/>
    <property type="molecule type" value="mRNA"/>
</dbReference>
<dbReference type="SMR" id="P42788"/>
<dbReference type="MEROPS" id="M14.A08"/>
<dbReference type="GO" id="GO:0005615">
    <property type="term" value="C:extracellular space"/>
    <property type="evidence" value="ECO:0007669"/>
    <property type="project" value="TreeGrafter"/>
</dbReference>
<dbReference type="GO" id="GO:0004181">
    <property type="term" value="F:metallocarboxypeptidase activity"/>
    <property type="evidence" value="ECO:0007669"/>
    <property type="project" value="InterPro"/>
</dbReference>
<dbReference type="GO" id="GO:0008270">
    <property type="term" value="F:zinc ion binding"/>
    <property type="evidence" value="ECO:0007669"/>
    <property type="project" value="InterPro"/>
</dbReference>
<dbReference type="GO" id="GO:0006508">
    <property type="term" value="P:proteolysis"/>
    <property type="evidence" value="ECO:0007669"/>
    <property type="project" value="UniProtKB-KW"/>
</dbReference>
<dbReference type="CDD" id="cd03860">
    <property type="entry name" value="M14_CP_A-B_like"/>
    <property type="match status" value="1"/>
</dbReference>
<dbReference type="FunFam" id="3.40.630.10:FF:000040">
    <property type="entry name" value="zinc carboxypeptidase"/>
    <property type="match status" value="1"/>
</dbReference>
<dbReference type="Gene3D" id="3.40.630.10">
    <property type="entry name" value="Zn peptidases"/>
    <property type="match status" value="1"/>
</dbReference>
<dbReference type="InterPro" id="IPR000834">
    <property type="entry name" value="Peptidase_M14"/>
</dbReference>
<dbReference type="PANTHER" id="PTHR11705">
    <property type="entry name" value="PROTEASE FAMILY M14 CARBOXYPEPTIDASE A,B"/>
    <property type="match status" value="1"/>
</dbReference>
<dbReference type="PANTHER" id="PTHR11705:SF156">
    <property type="entry name" value="RH39904P-RELATED"/>
    <property type="match status" value="1"/>
</dbReference>
<dbReference type="Pfam" id="PF00246">
    <property type="entry name" value="Peptidase_M14"/>
    <property type="match status" value="1"/>
</dbReference>
<dbReference type="PRINTS" id="PR00765">
    <property type="entry name" value="CRBOXYPTASEA"/>
</dbReference>
<dbReference type="SMART" id="SM00631">
    <property type="entry name" value="Zn_pept"/>
    <property type="match status" value="1"/>
</dbReference>
<dbReference type="SUPFAM" id="SSF53187">
    <property type="entry name" value="Zn-dependent exopeptidases"/>
    <property type="match status" value="1"/>
</dbReference>
<dbReference type="PROSITE" id="PS00132">
    <property type="entry name" value="CARBOXYPEPT_ZN_1"/>
    <property type="match status" value="1"/>
</dbReference>
<dbReference type="PROSITE" id="PS00133">
    <property type="entry name" value="CARBOXYPEPT_ZN_2"/>
    <property type="match status" value="1"/>
</dbReference>
<dbReference type="PROSITE" id="PS52035">
    <property type="entry name" value="PEPTIDASE_M14"/>
    <property type="match status" value="1"/>
</dbReference>
<keyword id="KW-0121">Carboxypeptidase</keyword>
<keyword id="KW-1015">Disulfide bond</keyword>
<keyword id="KW-0378">Hydrolase</keyword>
<keyword id="KW-0479">Metal-binding</keyword>
<keyword id="KW-0482">Metalloprotease</keyword>
<keyword id="KW-0645">Protease</keyword>
<keyword id="KW-0964">Secreted</keyword>
<keyword id="KW-0862">Zinc</keyword>
<sequence length="304" mass="34849">QYHTLPEIYSWLDRLVQEHPEHVEPVVGGKSYEGREIRGVKVSYKKGNPVVMVESNIHAREWITAATTTYLLNELLTSKNSTIREMAENYDWYIFPVTNPDGYVYTHTTDRMWRKTRSPNPDSLCAGTDPNRNWNFHWMEQGTSSRPCTETYGGKKAFSEVETRSFSDFLKTLKGQIKVYLAFHSYSQLLLFPYGHTCQHTYNHDDLQAIGDAAARSLAQRYGTDYTVGNIYDAIYPASGGSMDWAYDTLDIPIAYTYELRPRDGWNGFQLPANQIIPTGEETVDSVVTILKESRRLGYFNTSD</sequence>
<proteinExistence type="evidence at transcript level"/>
<accession>P42788</accession>
<reference key="1">
    <citation type="journal article" date="1993" name="Insect Mol. Biol.">
        <title>Gut-specific genes from the black fly Simulium vittatum encoding trypsin-like and carboxypeptidase-like proteins.</title>
        <authorList>
            <person name="Ramos A."/>
            <person name="Mahowald A."/>
            <person name="Jacobs-Lorena M."/>
        </authorList>
    </citation>
    <scope>NUCLEOTIDE SEQUENCE [MRNA]</scope>
    <source>
        <tissue>Gut</tissue>
    </source>
</reference>
<protein>
    <recommendedName>
        <fullName>Zinc carboxypeptidase</fullName>
        <ecNumber>3.4.17.-</ecNumber>
    </recommendedName>
</protein>
<evidence type="ECO:0000250" key="1"/>
<evidence type="ECO:0000250" key="2">
    <source>
        <dbReference type="UniProtKB" id="P00730"/>
    </source>
</evidence>
<evidence type="ECO:0000255" key="3">
    <source>
        <dbReference type="PROSITE-ProRule" id="PRU01379"/>
    </source>
</evidence>
<evidence type="ECO:0000305" key="4"/>
<comment type="function">
    <text>Involved in the digestion of the blood meal.</text>
</comment>
<comment type="cofactor">
    <cofactor evidence="2">
        <name>Zn(2+)</name>
        <dbReference type="ChEBI" id="CHEBI:29105"/>
    </cofactor>
    <text evidence="2">Binds 1 zinc ion per subunit.</text>
</comment>
<comment type="subcellular location">
    <subcellularLocation>
        <location>Secreted</location>
    </subcellularLocation>
</comment>
<comment type="tissue specificity">
    <text>Gut specific.</text>
</comment>
<comment type="induction">
    <text>By blood meal.</text>
</comment>
<comment type="similarity">
    <text evidence="4">Belongs to the peptidase M14 family.</text>
</comment>